<organism>
    <name type="scientific">Pongo abelii</name>
    <name type="common">Sumatran orangutan</name>
    <name type="synonym">Pongo pygmaeus abelii</name>
    <dbReference type="NCBI Taxonomy" id="9601"/>
    <lineage>
        <taxon>Eukaryota</taxon>
        <taxon>Metazoa</taxon>
        <taxon>Chordata</taxon>
        <taxon>Craniata</taxon>
        <taxon>Vertebrata</taxon>
        <taxon>Euteleostomi</taxon>
        <taxon>Mammalia</taxon>
        <taxon>Eutheria</taxon>
        <taxon>Euarchontoglires</taxon>
        <taxon>Primates</taxon>
        <taxon>Haplorrhini</taxon>
        <taxon>Catarrhini</taxon>
        <taxon>Hominidae</taxon>
        <taxon>Pongo</taxon>
    </lineage>
</organism>
<protein>
    <recommendedName>
        <fullName evidence="6">YTH domain-containing family protein 3</fullName>
    </recommendedName>
</protein>
<keyword id="KW-0007">Acetylation</keyword>
<keyword id="KW-0963">Cytoplasm</keyword>
<keyword id="KW-0597">Phosphoprotein</keyword>
<keyword id="KW-1185">Reference proteome</keyword>
<keyword id="KW-0694">RNA-binding</keyword>
<comment type="function">
    <text evidence="1 2">Specifically recognizes and binds N6-methyladenosine (m6A)-containing RNAs, and regulates their stability. M6A is a modification present at internal sites of mRNAs and some non-coding RNAs and plays a role in mRNA stability and processing. Acts as a regulator of mRNA stability by promoting degradation of m6A-containing mRNAs via interaction with the CCR4-NOT complex or PAN3. The YTHDF paralogs (YTHDF1, YTHDF2 and YTHDF3) share m6A-containing mRNAs targets and act redundantly to mediate mRNA degradation and cellular differentiation (By similarity). Acts as a negative regulator of type I interferon response by down-regulating interferon-stimulated genes (ISGs) expression: acts by binding to FOXO3 mRNAs. Binds to FOXO3 mRNAs independently of METTL3-mediated m6A modification (By similarity). Can also act as a regulator of mRNA stability in cooperation with YTHDF2 by binding to m6A-containing mRNA and promoting their degradation. Recognizes and binds m6A-containing circular RNAs (circRNAs); circRNAs are generated through back-splicing of pre-mRNAs, a non-canonical splicing process promoted by dsRNA structures across circularizing exons. Promotes formation of phase-separated membraneless compartments, such as P-bodies or stress granules, by undergoing liquid-liquid phase separation upon binding to mRNAs containing multiple m6A-modified residues: polymethylated mRNAs act as a multivalent scaffold for the binding of YTHDF proteins, juxtaposing their disordered regions and thereby leading to phase separation. The resulting mRNA-YTHDF complexes then partition into different endogenous phase-separated membraneless compartments, such as P-bodies, stress granules or neuronal RNA granules. May also recognize and bind N1-methyladenosine (m1A)-containing mRNAs: inhibits trophoblast invasion by binding to m1A-methylated transcripts of IGF1R, promoting their degradation (By similarity).</text>
</comment>
<comment type="subunit">
    <text evidence="1 2">Interacts with CNOT1; promoting recruitment of the CCR4-NOT complex. Interacts with YTHDF1. Interacts with YTHDF2 (By similarity). Interacts with PAN3 (By similarity).</text>
</comment>
<comment type="subcellular location">
    <subcellularLocation>
        <location evidence="1">Cytoplasm</location>
        <location evidence="1">Cytosol</location>
    </subcellularLocation>
    <subcellularLocation>
        <location evidence="1">Cytoplasm</location>
        <location evidence="1">P-body</location>
    </subcellularLocation>
    <subcellularLocation>
        <location evidence="1">Cytoplasm</location>
        <location evidence="1">Stress granule</location>
    </subcellularLocation>
</comment>
<comment type="domain">
    <text evidence="1">The disordered regions have the ability to interact with each other and to 'phase separate' into liquid droplets within the cytosol following binding to mRNAs containing multiple m6A-modified residues. This leads to the partition of m6A-containing mRNAs into membraneless compartments, where mRNAs may be stored, degraded or used to transport mRNAs to dendritic arbors in neurons.</text>
</comment>
<comment type="similarity">
    <text evidence="6">Belongs to the YTHDF family. YTHDF3 subfamily.</text>
</comment>
<dbReference type="EMBL" id="CR857137">
    <property type="protein sequence ID" value="CAH89439.1"/>
    <property type="molecule type" value="mRNA"/>
</dbReference>
<dbReference type="RefSeq" id="NP_001124613.1">
    <property type="nucleotide sequence ID" value="NM_001131141.1"/>
</dbReference>
<dbReference type="SMR" id="Q5RFL8"/>
<dbReference type="FunCoup" id="Q5RFL8">
    <property type="interactions" value="3880"/>
</dbReference>
<dbReference type="STRING" id="9601.ENSPPYP00000020890"/>
<dbReference type="Ensembl" id="ENSPPYT00000021724.3">
    <property type="protein sequence ID" value="ENSPPYP00000020890.3"/>
    <property type="gene ID" value="ENSPPYG00000018626.3"/>
</dbReference>
<dbReference type="GeneID" id="100171450"/>
<dbReference type="KEGG" id="pon:100171450"/>
<dbReference type="CTD" id="253943"/>
<dbReference type="eggNOG" id="KOG1901">
    <property type="taxonomic scope" value="Eukaryota"/>
</dbReference>
<dbReference type="GeneTree" id="ENSGT00940000158777"/>
<dbReference type="InParanoid" id="Q5RFL8"/>
<dbReference type="OrthoDB" id="306690at2759"/>
<dbReference type="Proteomes" id="UP000001595">
    <property type="component" value="Chromosome 8"/>
</dbReference>
<dbReference type="GO" id="GO:0005737">
    <property type="term" value="C:cytoplasm"/>
    <property type="evidence" value="ECO:0000250"/>
    <property type="project" value="UniProtKB"/>
</dbReference>
<dbReference type="GO" id="GO:0010494">
    <property type="term" value="C:cytoplasmic stress granule"/>
    <property type="evidence" value="ECO:0000250"/>
    <property type="project" value="UniProtKB"/>
</dbReference>
<dbReference type="GO" id="GO:0005829">
    <property type="term" value="C:cytosol"/>
    <property type="evidence" value="ECO:0007669"/>
    <property type="project" value="UniProtKB-SubCell"/>
</dbReference>
<dbReference type="GO" id="GO:0000932">
    <property type="term" value="C:P-body"/>
    <property type="evidence" value="ECO:0000250"/>
    <property type="project" value="UniProtKB"/>
</dbReference>
<dbReference type="GO" id="GO:0003729">
    <property type="term" value="F:mRNA binding"/>
    <property type="evidence" value="ECO:0007669"/>
    <property type="project" value="TreeGrafter"/>
</dbReference>
<dbReference type="GO" id="GO:1990247">
    <property type="term" value="F:N6-methyladenosine-containing RNA reader activity"/>
    <property type="evidence" value="ECO:0000250"/>
    <property type="project" value="UniProtKB"/>
</dbReference>
<dbReference type="GO" id="GO:0043022">
    <property type="term" value="F:ribosome binding"/>
    <property type="evidence" value="ECO:0000250"/>
    <property type="project" value="UniProtKB"/>
</dbReference>
<dbReference type="GO" id="GO:0061157">
    <property type="term" value="P:mRNA destabilization"/>
    <property type="evidence" value="ECO:0000250"/>
    <property type="project" value="UniProtKB"/>
</dbReference>
<dbReference type="GO" id="GO:0060339">
    <property type="term" value="P:negative regulation of type I interferon-mediated signaling pathway"/>
    <property type="evidence" value="ECO:0000250"/>
    <property type="project" value="UniProtKB"/>
</dbReference>
<dbReference type="GO" id="GO:0070925">
    <property type="term" value="P:organelle assembly"/>
    <property type="evidence" value="ECO:0000250"/>
    <property type="project" value="UniProtKB"/>
</dbReference>
<dbReference type="GO" id="GO:0045727">
    <property type="term" value="P:positive regulation of translation"/>
    <property type="evidence" value="ECO:0000250"/>
    <property type="project" value="UniProtKB"/>
</dbReference>
<dbReference type="GO" id="GO:0043488">
    <property type="term" value="P:regulation of mRNA stability"/>
    <property type="evidence" value="ECO:0000250"/>
    <property type="project" value="UniProtKB"/>
</dbReference>
<dbReference type="GO" id="GO:1901163">
    <property type="term" value="P:regulation of trophoblast cell migration"/>
    <property type="evidence" value="ECO:0000250"/>
    <property type="project" value="UniProtKB"/>
</dbReference>
<dbReference type="GO" id="GO:0034063">
    <property type="term" value="P:stress granule assembly"/>
    <property type="evidence" value="ECO:0000250"/>
    <property type="project" value="UniProtKB"/>
</dbReference>
<dbReference type="CDD" id="cd21134">
    <property type="entry name" value="YTH"/>
    <property type="match status" value="1"/>
</dbReference>
<dbReference type="FunFam" id="3.10.590.10:FF:000001">
    <property type="entry name" value="YTH domain family 1, isoform CRA_a"/>
    <property type="match status" value="1"/>
</dbReference>
<dbReference type="Gene3D" id="3.10.590.10">
    <property type="entry name" value="ph1033 like domains"/>
    <property type="match status" value="1"/>
</dbReference>
<dbReference type="InterPro" id="IPR007275">
    <property type="entry name" value="YTH_domain"/>
</dbReference>
<dbReference type="InterPro" id="IPR045168">
    <property type="entry name" value="YTH_prot"/>
</dbReference>
<dbReference type="PANTHER" id="PTHR12357:SF9">
    <property type="entry name" value="YTH DOMAIN-CONTAINING FAMILY PROTEIN 3"/>
    <property type="match status" value="1"/>
</dbReference>
<dbReference type="PANTHER" id="PTHR12357">
    <property type="entry name" value="YTH YT521-B HOMOLOGY DOMAIN-CONTAINING"/>
    <property type="match status" value="1"/>
</dbReference>
<dbReference type="Pfam" id="PF04146">
    <property type="entry name" value="YTH"/>
    <property type="match status" value="1"/>
</dbReference>
<dbReference type="SUPFAM" id="SSF81995">
    <property type="entry name" value="beta-sandwich domain of Sec23/24"/>
    <property type="match status" value="1"/>
</dbReference>
<dbReference type="PROSITE" id="PS50882">
    <property type="entry name" value="YTH"/>
    <property type="match status" value="1"/>
</dbReference>
<evidence type="ECO:0000250" key="1">
    <source>
        <dbReference type="UniProtKB" id="Q7Z739"/>
    </source>
</evidence>
<evidence type="ECO:0000250" key="2">
    <source>
        <dbReference type="UniProtKB" id="Q8BYK6"/>
    </source>
</evidence>
<evidence type="ECO:0000250" key="3">
    <source>
        <dbReference type="UniProtKB" id="Q9Y5A9"/>
    </source>
</evidence>
<evidence type="ECO:0000255" key="4">
    <source>
        <dbReference type="PROSITE-ProRule" id="PRU00225"/>
    </source>
</evidence>
<evidence type="ECO:0000256" key="5">
    <source>
        <dbReference type="SAM" id="MobiDB-lite"/>
    </source>
</evidence>
<evidence type="ECO:0000305" key="6"/>
<reference key="1">
    <citation type="submission" date="2004-11" db="EMBL/GenBank/DDBJ databases">
        <authorList>
            <consortium name="The German cDNA consortium"/>
        </authorList>
    </citation>
    <scope>NUCLEOTIDE SEQUENCE [LARGE SCALE MRNA]</scope>
    <source>
        <tissue>Kidney</tissue>
    </source>
</reference>
<feature type="initiator methionine" description="Removed" evidence="1">
    <location>
        <position position="1"/>
    </location>
</feature>
<feature type="chain" id="PRO_0000230993" description="YTH domain-containing family protein 3">
    <location>
        <begin position="2"/>
        <end position="585"/>
    </location>
</feature>
<feature type="domain" description="YTH" evidence="4">
    <location>
        <begin position="416"/>
        <end position="550"/>
    </location>
</feature>
<feature type="region of interest" description="Disordered" evidence="5">
    <location>
        <begin position="1"/>
        <end position="52"/>
    </location>
</feature>
<feature type="region of interest" description="Disordered" evidence="5">
    <location>
        <begin position="243"/>
        <end position="277"/>
    </location>
</feature>
<feature type="region of interest" description="Disordered" evidence="5">
    <location>
        <begin position="304"/>
        <end position="351"/>
    </location>
</feature>
<feature type="compositionally biased region" description="Polar residues" evidence="5">
    <location>
        <begin position="15"/>
        <end position="24"/>
    </location>
</feature>
<feature type="compositionally biased region" description="Basic residues" evidence="5">
    <location>
        <begin position="244"/>
        <end position="254"/>
    </location>
</feature>
<feature type="compositionally biased region" description="Low complexity" evidence="5">
    <location>
        <begin position="329"/>
        <end position="351"/>
    </location>
</feature>
<feature type="binding site" evidence="1">
    <location>
        <begin position="422"/>
        <end position="424"/>
    </location>
    <ligand>
        <name>RNA</name>
        <dbReference type="ChEBI" id="CHEBI:33697"/>
    </ligand>
    <ligandPart>
        <name>N(6)-methyladenosine 5'-phosphate residue</name>
        <dbReference type="ChEBI" id="CHEBI:74449"/>
    </ligandPart>
</feature>
<feature type="binding site" evidence="3">
    <location>
        <position position="428"/>
    </location>
    <ligand>
        <name>RNA</name>
        <dbReference type="ChEBI" id="CHEBI:33697"/>
    </ligand>
    <ligandPart>
        <name>N(6)-methyladenosine 5'-phosphate residue</name>
        <dbReference type="ChEBI" id="CHEBI:74449"/>
    </ligandPart>
</feature>
<feature type="binding site" evidence="1">
    <location>
        <begin position="438"/>
        <end position="439"/>
    </location>
    <ligand>
        <name>RNA</name>
        <dbReference type="ChEBI" id="CHEBI:33697"/>
    </ligand>
    <ligandPart>
        <name>N(6)-methyladenosine 5'-phosphate residue</name>
        <dbReference type="ChEBI" id="CHEBI:74449"/>
    </ligandPart>
</feature>
<feature type="binding site" evidence="3">
    <location>
        <position position="468"/>
    </location>
    <ligand>
        <name>RNA</name>
        <dbReference type="ChEBI" id="CHEBI:33697"/>
    </ligand>
    <ligandPart>
        <name>N(6)-methyladenosine 5'-phosphate residue</name>
        <dbReference type="ChEBI" id="CHEBI:74449"/>
    </ligandPart>
</feature>
<feature type="binding site" evidence="1">
    <location>
        <position position="492"/>
    </location>
    <ligand>
        <name>RNA</name>
        <dbReference type="ChEBI" id="CHEBI:33697"/>
    </ligand>
    <ligandPart>
        <name>N(6)-methyladenosine 5'-phosphate residue</name>
        <dbReference type="ChEBI" id="CHEBI:74449"/>
    </ligandPart>
</feature>
<feature type="binding site" evidence="1">
    <location>
        <position position="497"/>
    </location>
    <ligand>
        <name>RNA</name>
        <dbReference type="ChEBI" id="CHEBI:33697"/>
    </ligand>
    <ligandPart>
        <name>N(6)-methyladenosine 5'-phosphate residue</name>
        <dbReference type="ChEBI" id="CHEBI:74449"/>
    </ligandPart>
</feature>
<feature type="modified residue" description="N-acetylserine" evidence="1">
    <location>
        <position position="2"/>
    </location>
</feature>
<feature type="modified residue" description="Phosphoserine" evidence="1">
    <location>
        <position position="23"/>
    </location>
</feature>
<name>YTHD3_PONAB</name>
<gene>
    <name evidence="1" type="primary">YTHDF3</name>
</gene>
<sequence length="585" mass="63861">MSATSVDQRPKGQGNKVSVQNGSIHQKDAVNDDDFEPYLSSQTNQSNSYPPMSDPYMPSYYAPSIGFPYSLGEAAWSTAGDQPMPYLTTYGQMSNGEHHYIPDGVFSQPGALGNTPPFLGQHGFNFFPGNADFSTWGTSGSQGQSTQSSAYSSSYGYPPSSLGRAITDGQAGFGNDTLSKVPGISSIEQGMTGLKIGGDLTAAVTKTVGTALSSSGMTSIATNSVPPVSSAAPKPTSWAAIARKPAKPQPKLKPKGNVGIGGSAVPPPPIKHNMNIGTWDEKGSVVKAPPTQPVLPPQTIIQQPQPLIQPPPLVQSQLPQQQPQPPQPQQQQGPQPQAQPHQVQPQQQQLQNRWVAPRNRGAGFNQNNGAGSENFGLGVVPVSASPSSVEVHPVLEKLKAINNYNPKDFDWNLKNGRVFIIKSYSEDDIHRSIKYSIWCSTEHGNKRLDAAYRSLNGKGPLYLLFSVNGSGHFCGVAEMKSVVDYNAYAGVWSQDKWKGKFEVKWIFVKDVPNNQLRHIRLENNDNKPVTNSRDTQEVPLEKAKQVLKIIATFKHTTSIFDDFAHYEKRQEEEEAMRRERNRNKQ</sequence>
<accession>Q5RFL8</accession>
<proteinExistence type="evidence at transcript level"/>